<dbReference type="EMBL" id="Z75134">
    <property type="protein sequence ID" value="CAA99446.1"/>
    <property type="molecule type" value="mRNA"/>
</dbReference>
<dbReference type="RefSeq" id="NP_001003236.1">
    <property type="nucleotide sequence ID" value="NM_001003236.1"/>
</dbReference>
<dbReference type="RefSeq" id="XP_005620396.1">
    <property type="nucleotide sequence ID" value="XM_005620339.2"/>
</dbReference>
<dbReference type="RefSeq" id="XP_005620397.1">
    <property type="nucleotide sequence ID" value="XM_005620340.2"/>
</dbReference>
<dbReference type="RefSeq" id="XP_005620398.1">
    <property type="nucleotide sequence ID" value="XM_005620341.2"/>
</dbReference>
<dbReference type="RefSeq" id="XP_038520006.1">
    <property type="nucleotide sequence ID" value="XM_038664078.1"/>
</dbReference>
<dbReference type="RefSeq" id="XP_038520007.1">
    <property type="nucleotide sequence ID" value="XM_038664079.1"/>
</dbReference>
<dbReference type="RefSeq" id="XP_038520008.1">
    <property type="nucleotide sequence ID" value="XM_038664080.1"/>
</dbReference>
<dbReference type="SMR" id="P62872"/>
<dbReference type="FunCoup" id="P62872">
    <property type="interactions" value="1660"/>
</dbReference>
<dbReference type="STRING" id="9615.ENSCAFP00000028342"/>
<dbReference type="PaxDb" id="9612-ENSCAFP00000031020"/>
<dbReference type="Ensembl" id="ENSCAFT00030002209.1">
    <property type="protein sequence ID" value="ENSCAFP00030001955.1"/>
    <property type="gene ID" value="ENSCAFG00030001243.1"/>
</dbReference>
<dbReference type="Ensembl" id="ENSCAFT00040008109.1">
    <property type="protein sequence ID" value="ENSCAFP00040007069.1"/>
    <property type="gene ID" value="ENSCAFG00040004230.1"/>
</dbReference>
<dbReference type="Ensembl" id="ENSCAFT00845028295.1">
    <property type="protein sequence ID" value="ENSCAFP00845022262.1"/>
    <property type="gene ID" value="ENSCAFG00845015784.1"/>
</dbReference>
<dbReference type="GeneID" id="403912"/>
<dbReference type="KEGG" id="cfa:403912"/>
<dbReference type="CTD" id="2782"/>
<dbReference type="VEuPathDB" id="HostDB:ENSCAFG00845015784"/>
<dbReference type="eggNOG" id="KOG0286">
    <property type="taxonomic scope" value="Eukaryota"/>
</dbReference>
<dbReference type="GeneTree" id="ENSGT01000000214413"/>
<dbReference type="HOGENOM" id="CLU_000288_57_34_1"/>
<dbReference type="InParanoid" id="P62872"/>
<dbReference type="OMA" id="PLDSQWV"/>
<dbReference type="OrthoDB" id="10255630at2759"/>
<dbReference type="TreeFam" id="TF106149"/>
<dbReference type="Reactome" id="R-CFA-1296041">
    <property type="pathway name" value="Activation of G protein gated Potassium channels"/>
</dbReference>
<dbReference type="Reactome" id="R-CFA-202040">
    <property type="pathway name" value="G-protein activation"/>
</dbReference>
<dbReference type="Reactome" id="R-CFA-2485179">
    <property type="pathway name" value="Activation of the phototransduction cascade"/>
</dbReference>
<dbReference type="Reactome" id="R-CFA-381676">
    <property type="pathway name" value="Glucagon-like Peptide-1 (GLP1) regulates insulin secretion"/>
</dbReference>
<dbReference type="Reactome" id="R-CFA-381753">
    <property type="pathway name" value="Olfactory Signaling Pathway"/>
</dbReference>
<dbReference type="Reactome" id="R-CFA-381771">
    <property type="pathway name" value="Synthesis, secretion, and inactivation of Glucagon-like Peptide-1 (GLP-1)"/>
</dbReference>
<dbReference type="Reactome" id="R-CFA-392170">
    <property type="pathway name" value="ADP signalling through P2Y purinoceptor 12"/>
</dbReference>
<dbReference type="Reactome" id="R-CFA-392451">
    <property type="pathway name" value="G beta:gamma signalling through PI3Kgamma"/>
</dbReference>
<dbReference type="Reactome" id="R-CFA-392851">
    <property type="pathway name" value="Prostacyclin signalling through prostacyclin receptor"/>
</dbReference>
<dbReference type="Reactome" id="R-CFA-400042">
    <property type="pathway name" value="Adrenaline,noradrenaline inhibits insulin secretion"/>
</dbReference>
<dbReference type="Reactome" id="R-CFA-4086398">
    <property type="pathway name" value="Ca2+ pathway"/>
</dbReference>
<dbReference type="Reactome" id="R-CFA-416476">
    <property type="pathway name" value="G alpha (q) signalling events"/>
</dbReference>
<dbReference type="Reactome" id="R-CFA-416482">
    <property type="pathway name" value="G alpha (12/13) signalling events"/>
</dbReference>
<dbReference type="Reactome" id="R-CFA-418217">
    <property type="pathway name" value="G beta:gamma signalling through PLC beta"/>
</dbReference>
<dbReference type="Reactome" id="R-CFA-418592">
    <property type="pathway name" value="ADP signalling through P2Y purinoceptor 1"/>
</dbReference>
<dbReference type="Reactome" id="R-CFA-418594">
    <property type="pathway name" value="G alpha (i) signalling events"/>
</dbReference>
<dbReference type="Reactome" id="R-CFA-418597">
    <property type="pathway name" value="G alpha (z) signalling events"/>
</dbReference>
<dbReference type="Reactome" id="R-CFA-420092">
    <property type="pathway name" value="Glucagon-type ligand receptors"/>
</dbReference>
<dbReference type="Reactome" id="R-CFA-428930">
    <property type="pathway name" value="Thromboxane signalling through TP receptor"/>
</dbReference>
<dbReference type="Reactome" id="R-CFA-432040">
    <property type="pathway name" value="Vasopressin regulates renal water homeostasis via Aquaporins"/>
</dbReference>
<dbReference type="Reactome" id="R-CFA-456926">
    <property type="pathway name" value="Thrombin signalling through proteinase activated receptors (PARs)"/>
</dbReference>
<dbReference type="Reactome" id="R-CFA-500657">
    <property type="pathway name" value="Presynaptic function of Kainate receptors"/>
</dbReference>
<dbReference type="Reactome" id="R-CFA-6814122">
    <property type="pathway name" value="Cooperation of PDCL (PhLP1) and TRiC/CCT in G-protein beta folding"/>
</dbReference>
<dbReference type="Reactome" id="R-CFA-8964315">
    <property type="pathway name" value="G beta:gamma signalling through BTK"/>
</dbReference>
<dbReference type="Reactome" id="R-CFA-8964616">
    <property type="pathway name" value="G beta:gamma signalling through CDC42"/>
</dbReference>
<dbReference type="Reactome" id="R-CFA-9009391">
    <property type="pathway name" value="Extra-nuclear estrogen signaling"/>
</dbReference>
<dbReference type="Reactome" id="R-CFA-9634597">
    <property type="pathway name" value="GPER1 signaling"/>
</dbReference>
<dbReference type="Reactome" id="R-CFA-9717207">
    <property type="pathway name" value="Sensory perception of sweet, bitter, and umami (glutamate) taste"/>
</dbReference>
<dbReference type="Reactome" id="R-CFA-9856530">
    <property type="pathway name" value="High laminar flow shear stress activates signaling by PIEZO1 and PECAM1:CDH5:KDR in endothelial cells"/>
</dbReference>
<dbReference type="Reactome" id="R-CFA-997272">
    <property type="pathway name" value="Inhibition of voltage gated Ca2+ channels via Gbeta/gamma subunits"/>
</dbReference>
<dbReference type="Proteomes" id="UP000002254">
    <property type="component" value="Unplaced"/>
</dbReference>
<dbReference type="Proteomes" id="UP000694429">
    <property type="component" value="Chromosome 5"/>
</dbReference>
<dbReference type="Proteomes" id="UP000694542">
    <property type="component" value="Chromosome 5"/>
</dbReference>
<dbReference type="Proteomes" id="UP000805418">
    <property type="component" value="Chromosome 5"/>
</dbReference>
<dbReference type="Bgee" id="ENSCAFG00000019216">
    <property type="expression patterns" value="Expressed in prefrontal cortex and 47 other cell types or tissues"/>
</dbReference>
<dbReference type="GO" id="GO:0005737">
    <property type="term" value="C:cytoplasm"/>
    <property type="evidence" value="ECO:0000318"/>
    <property type="project" value="GO_Central"/>
</dbReference>
<dbReference type="GO" id="GO:0005834">
    <property type="term" value="C:heterotrimeric G-protein complex"/>
    <property type="evidence" value="ECO:0000318"/>
    <property type="project" value="GO_Central"/>
</dbReference>
<dbReference type="GO" id="GO:0030159">
    <property type="term" value="F:signaling receptor complex adaptor activity"/>
    <property type="evidence" value="ECO:0000318"/>
    <property type="project" value="GO_Central"/>
</dbReference>
<dbReference type="GO" id="GO:0007186">
    <property type="term" value="P:G protein-coupled receptor signaling pathway"/>
    <property type="evidence" value="ECO:0000318"/>
    <property type="project" value="GO_Central"/>
</dbReference>
<dbReference type="CDD" id="cd00200">
    <property type="entry name" value="WD40"/>
    <property type="match status" value="1"/>
</dbReference>
<dbReference type="FunFam" id="2.130.10.10:FF:000007">
    <property type="entry name" value="Guanine nucleotide-binding protein G(I)/G(S)/G(T) subunit beta-1"/>
    <property type="match status" value="1"/>
</dbReference>
<dbReference type="Gene3D" id="2.130.10.10">
    <property type="entry name" value="YVTN repeat-like/Quinoprotein amine dehydrogenase"/>
    <property type="match status" value="1"/>
</dbReference>
<dbReference type="InterPro" id="IPR020472">
    <property type="entry name" value="G-protein_beta_WD-40_rep"/>
</dbReference>
<dbReference type="InterPro" id="IPR001632">
    <property type="entry name" value="Gprotein_B"/>
</dbReference>
<dbReference type="InterPro" id="IPR016346">
    <property type="entry name" value="Guanine_nucleotide-bd_bsu"/>
</dbReference>
<dbReference type="InterPro" id="IPR015943">
    <property type="entry name" value="WD40/YVTN_repeat-like_dom_sf"/>
</dbReference>
<dbReference type="InterPro" id="IPR019775">
    <property type="entry name" value="WD40_repeat_CS"/>
</dbReference>
<dbReference type="InterPro" id="IPR036322">
    <property type="entry name" value="WD40_repeat_dom_sf"/>
</dbReference>
<dbReference type="InterPro" id="IPR001680">
    <property type="entry name" value="WD40_rpt"/>
</dbReference>
<dbReference type="PANTHER" id="PTHR19850">
    <property type="entry name" value="GUANINE NUCLEOTIDE-BINDING PROTEIN BETA G PROTEIN BETA"/>
    <property type="match status" value="1"/>
</dbReference>
<dbReference type="Pfam" id="PF25391">
    <property type="entry name" value="WD40_Gbeta"/>
    <property type="match status" value="1"/>
</dbReference>
<dbReference type="PIRSF" id="PIRSF002394">
    <property type="entry name" value="GN-bd_beta"/>
    <property type="match status" value="1"/>
</dbReference>
<dbReference type="PRINTS" id="PR00319">
    <property type="entry name" value="GPROTEINB"/>
</dbReference>
<dbReference type="PRINTS" id="PR00320">
    <property type="entry name" value="GPROTEINBRPT"/>
</dbReference>
<dbReference type="SMART" id="SM00320">
    <property type="entry name" value="WD40"/>
    <property type="match status" value="7"/>
</dbReference>
<dbReference type="SUPFAM" id="SSF50978">
    <property type="entry name" value="WD40 repeat-like"/>
    <property type="match status" value="1"/>
</dbReference>
<dbReference type="PROSITE" id="PS00678">
    <property type="entry name" value="WD_REPEATS_1"/>
    <property type="match status" value="3"/>
</dbReference>
<dbReference type="PROSITE" id="PS50082">
    <property type="entry name" value="WD_REPEATS_2"/>
    <property type="match status" value="6"/>
</dbReference>
<dbReference type="PROSITE" id="PS50294">
    <property type="entry name" value="WD_REPEATS_REGION"/>
    <property type="match status" value="1"/>
</dbReference>
<gene>
    <name type="primary">GNB1</name>
</gene>
<accession>P62872</accession>
<accession>P04697</accession>
<accession>P04901</accession>
<feature type="initiator methionine" description="Removed" evidence="3">
    <location>
        <position position="1"/>
    </location>
</feature>
<feature type="chain" id="PRO_0000127685" description="Guanine nucleotide-binding protein G(I)/G(S)/G(T) subunit beta-1">
    <location>
        <begin position="2"/>
        <end position="340"/>
    </location>
</feature>
<feature type="repeat" description="WD 1" evidence="3">
    <location>
        <begin position="46"/>
        <end position="94"/>
    </location>
</feature>
<feature type="repeat" description="WD 2" evidence="3">
    <location>
        <begin position="95"/>
        <end position="140"/>
    </location>
</feature>
<feature type="repeat" description="WD 3" evidence="3">
    <location>
        <begin position="141"/>
        <end position="181"/>
    </location>
</feature>
<feature type="repeat" description="WD 4" evidence="3">
    <location>
        <begin position="182"/>
        <end position="223"/>
    </location>
</feature>
<feature type="repeat" description="WD 5" evidence="3">
    <location>
        <begin position="224"/>
        <end position="267"/>
    </location>
</feature>
<feature type="repeat" description="WD 6" evidence="3">
    <location>
        <begin position="268"/>
        <end position="309"/>
    </location>
</feature>
<feature type="repeat" description="WD 7" evidence="3">
    <location>
        <begin position="310"/>
        <end position="340"/>
    </location>
</feature>
<feature type="modified residue" description="N-acetylserine" evidence="3">
    <location>
        <position position="2"/>
    </location>
</feature>
<feature type="modified residue" description="Phosphoserine" evidence="3">
    <location>
        <position position="2"/>
    </location>
</feature>
<feature type="modified residue" description="Phosphohistidine" evidence="2">
    <location>
        <position position="266"/>
    </location>
</feature>
<organism>
    <name type="scientific">Canis lupus familiaris</name>
    <name type="common">Dog</name>
    <name type="synonym">Canis familiaris</name>
    <dbReference type="NCBI Taxonomy" id="9615"/>
    <lineage>
        <taxon>Eukaryota</taxon>
        <taxon>Metazoa</taxon>
        <taxon>Chordata</taxon>
        <taxon>Craniata</taxon>
        <taxon>Vertebrata</taxon>
        <taxon>Euteleostomi</taxon>
        <taxon>Mammalia</taxon>
        <taxon>Eutheria</taxon>
        <taxon>Laurasiatheria</taxon>
        <taxon>Carnivora</taxon>
        <taxon>Caniformia</taxon>
        <taxon>Canidae</taxon>
        <taxon>Canis</taxon>
    </lineage>
</organism>
<proteinExistence type="evidence at transcript level"/>
<protein>
    <recommendedName>
        <fullName>Guanine nucleotide-binding protein G(I)/G(S)/G(T) subunit beta-1</fullName>
    </recommendedName>
    <alternativeName>
        <fullName>Transducin beta chain 1</fullName>
    </alternativeName>
</protein>
<reference key="1">
    <citation type="journal article" date="1997" name="Res. Vet. Sci.">
        <title>Cloning of the cDNA encoding rod photoreceptor cGMP-phosphodiesterase alpha and gamma subunits from the retinal degenerate Labrador retriever dog.</title>
        <authorList>
            <person name="Kylma T."/>
            <person name="Paulin L."/>
            <person name="Hurwitz M.Y."/>
            <person name="Hurwitz R.L."/>
            <person name="Kommonen B."/>
        </authorList>
    </citation>
    <scope>NUCLEOTIDE SEQUENCE [MRNA]</scope>
    <source>
        <strain>Labrador</strain>
    </source>
</reference>
<comment type="function">
    <text>Guanine nucleotide-binding proteins (G proteins) are involved as a modulator or transducer in various transmembrane signaling systems. The beta and gamma chains are required for the GTPase activity, for replacement of GDP by GTP, and for G protein-effector interaction.</text>
</comment>
<comment type="subunit">
    <text evidence="2 3">G proteins are composed of 3 units, alpha, beta and gamma (By similarity). The heterodimer formed by GNB1 and GNG2 interacts with ARHGEF5 (By similarity). The heterodimer formed by GNB1 and GNG2 interacts with GRK2 (By similarity). Forms a complex with GNAO1 and GNG3. Interacts with ARHGEF18 and RASD2 (By similarity). Forms complexes with TAS2R14 and G-proteins; these complexes play a role in the perception of bitterness (By similarity). Component of the TAS2R14-GNAI1 complex, consisting of TAS2R14, GNAI1, GNB1 and GNG2 (By similarity). Component of the TAS2R14-GNAT3 complex, consisting of TAS2R14, GNAT3, GNB1 and GNG2 (By similarity). Component of the TAS2R14-GNAS2 complex, consisting of TAS2R14, GNAS2, GNB1 and GNG2 (By similarity).</text>
</comment>
<comment type="PTM">
    <text evidence="1">Phosphorylation at His-266 by NDKB contributes to G protein activation by increasing the high energetic phosphate transfer onto GDP.</text>
</comment>
<comment type="similarity">
    <text evidence="4">Belongs to the WD repeat G protein beta family.</text>
</comment>
<name>GBB1_CANLF</name>
<keyword id="KW-0007">Acetylation</keyword>
<keyword id="KW-0597">Phosphoprotein</keyword>
<keyword id="KW-1185">Reference proteome</keyword>
<keyword id="KW-0677">Repeat</keyword>
<keyword id="KW-0807">Transducer</keyword>
<keyword id="KW-0853">WD repeat</keyword>
<sequence>MSELDQLRQEAEQLKNQIRDARKACADATLSQITNNIDPVGRIQMRTRRTLRGHLAKIYAMHWGTDSRLLVSASQDGKLIIWDSYTTNKVHAIPLRSSWVMTCAYAPSGNYVACGGLDNICSIYNLKTREGNVRVSRELAGHTGYLSCCRFLDDNQIVTSSGDTTCALWDIETGQQTTTFTGHTGDVMSLSLAPDTRLFVSGACDASAKLWDVREGMCRQTFTGHESDINAICFFPNGNAFATGSDDATCRLFDLRADQELMTYSHDNIICGITSVSFSKSGRLLLAGYDDFNCNVWDALKADRAGVLAGHDNRVSCLGVTDDGMAVATGSWDSFLKIWN</sequence>
<evidence type="ECO:0000250" key="1"/>
<evidence type="ECO:0000250" key="2">
    <source>
        <dbReference type="UniProtKB" id="P62871"/>
    </source>
</evidence>
<evidence type="ECO:0000250" key="3">
    <source>
        <dbReference type="UniProtKB" id="P62873"/>
    </source>
</evidence>
<evidence type="ECO:0000305" key="4"/>